<dbReference type="EMBL" id="AB061793">
    <property type="protein sequence ID" value="BAB84554.1"/>
    <property type="status" value="ALT_SEQ"/>
    <property type="molecule type" value="mRNA"/>
</dbReference>
<dbReference type="EMBL" id="AJ580635">
    <property type="protein sequence ID" value="CAE45267.1"/>
    <property type="molecule type" value="mRNA"/>
</dbReference>
<dbReference type="EMBL" id="AK095471">
    <property type="protein sequence ID" value="BAG53063.1"/>
    <property type="molecule type" value="mRNA"/>
</dbReference>
<dbReference type="EMBL" id="AC005328">
    <property type="protein sequence ID" value="AAC27672.1"/>
    <property type="status" value="ALT_SEQ"/>
    <property type="molecule type" value="Genomic_DNA"/>
</dbReference>
<dbReference type="EMBL" id="BC015049">
    <property type="protein sequence ID" value="AAH15049.1"/>
    <property type="molecule type" value="mRNA"/>
</dbReference>
<dbReference type="CCDS" id="CCDS12081.1"/>
<dbReference type="RefSeq" id="NP_570719.1">
    <property type="nucleotide sequence ID" value="NM_130807.3"/>
</dbReference>
<dbReference type="RefSeq" id="XP_011525985.1">
    <property type="nucleotide sequence ID" value="XM_011527683.4"/>
</dbReference>
<dbReference type="RefSeq" id="XP_047294125.1">
    <property type="nucleotide sequence ID" value="XM_047438169.1"/>
</dbReference>
<dbReference type="RefSeq" id="XP_054175772.1">
    <property type="nucleotide sequence ID" value="XM_054319797.1"/>
</dbReference>
<dbReference type="RefSeq" id="XP_054175773.1">
    <property type="nucleotide sequence ID" value="XM_054319798.1"/>
</dbReference>
<dbReference type="SMR" id="Q96BX8"/>
<dbReference type="BioGRID" id="125978">
    <property type="interactions" value="28"/>
</dbReference>
<dbReference type="FunCoup" id="Q96BX8">
    <property type="interactions" value="2505"/>
</dbReference>
<dbReference type="STRING" id="9606.ENSP00000349575"/>
<dbReference type="iPTMnet" id="Q96BX8"/>
<dbReference type="PhosphoSitePlus" id="Q96BX8"/>
<dbReference type="BioMuta" id="MOB3A"/>
<dbReference type="DMDM" id="56749352"/>
<dbReference type="jPOST" id="Q96BX8"/>
<dbReference type="MassIVE" id="Q96BX8"/>
<dbReference type="PaxDb" id="9606-ENSP00000349575"/>
<dbReference type="PeptideAtlas" id="Q96BX8"/>
<dbReference type="ProteomicsDB" id="76125"/>
<dbReference type="Pumba" id="Q96BX8"/>
<dbReference type="Antibodypedia" id="42277">
    <property type="antibodies" value="59 antibodies from 20 providers"/>
</dbReference>
<dbReference type="DNASU" id="126308"/>
<dbReference type="Ensembl" id="ENST00000357066.8">
    <property type="protein sequence ID" value="ENSP00000349575.2"/>
    <property type="gene ID" value="ENSG00000172081.14"/>
</dbReference>
<dbReference type="Ensembl" id="ENST00000592280.1">
    <property type="protein sequence ID" value="ENSP00000466249.1"/>
    <property type="gene ID" value="ENSG00000172081.14"/>
</dbReference>
<dbReference type="GeneID" id="126308"/>
<dbReference type="KEGG" id="hsa:126308"/>
<dbReference type="MANE-Select" id="ENST00000357066.8">
    <property type="protein sequence ID" value="ENSP00000349575.2"/>
    <property type="RefSeq nucleotide sequence ID" value="NM_130807.3"/>
    <property type="RefSeq protein sequence ID" value="NP_570719.1"/>
</dbReference>
<dbReference type="UCSC" id="uc002luu.4">
    <property type="organism name" value="human"/>
</dbReference>
<dbReference type="AGR" id="HGNC:29802"/>
<dbReference type="CTD" id="126308"/>
<dbReference type="GeneCards" id="MOB3A"/>
<dbReference type="HGNC" id="HGNC:29802">
    <property type="gene designation" value="MOB3A"/>
</dbReference>
<dbReference type="HPA" id="ENSG00000172081">
    <property type="expression patterns" value="Low tissue specificity"/>
</dbReference>
<dbReference type="MIM" id="620929">
    <property type="type" value="gene"/>
</dbReference>
<dbReference type="neXtProt" id="NX_Q96BX8"/>
<dbReference type="OpenTargets" id="ENSG00000172081"/>
<dbReference type="PharmGKB" id="PA134901591"/>
<dbReference type="VEuPathDB" id="HostDB:ENSG00000172081"/>
<dbReference type="eggNOG" id="KOG1903">
    <property type="taxonomic scope" value="Eukaryota"/>
</dbReference>
<dbReference type="GeneTree" id="ENSGT01120000271863"/>
<dbReference type="HOGENOM" id="CLU_038321_3_0_1"/>
<dbReference type="InParanoid" id="Q96BX8"/>
<dbReference type="OMA" id="HMGSEAH"/>
<dbReference type="OrthoDB" id="8170117at2759"/>
<dbReference type="PAN-GO" id="Q96BX8">
    <property type="GO annotations" value="5 GO annotations based on evolutionary models"/>
</dbReference>
<dbReference type="PhylomeDB" id="Q96BX8"/>
<dbReference type="TreeFam" id="TF300789"/>
<dbReference type="PathwayCommons" id="Q96BX8"/>
<dbReference type="SignaLink" id="Q96BX8"/>
<dbReference type="BioGRID-ORCS" id="126308">
    <property type="hits" value="10 hits in 1162 CRISPR screens"/>
</dbReference>
<dbReference type="ChiTaRS" id="MOB3A">
    <property type="organism name" value="human"/>
</dbReference>
<dbReference type="GeneWiki" id="MOBKL2A"/>
<dbReference type="GenomeRNAi" id="126308"/>
<dbReference type="Pharos" id="Q96BX8">
    <property type="development level" value="Tdark"/>
</dbReference>
<dbReference type="PRO" id="PR:Q96BX8"/>
<dbReference type="Proteomes" id="UP000005640">
    <property type="component" value="Chromosome 19"/>
</dbReference>
<dbReference type="RNAct" id="Q96BX8">
    <property type="molecule type" value="protein"/>
</dbReference>
<dbReference type="Bgee" id="ENSG00000172081">
    <property type="expression patterns" value="Expressed in blood and 168 other cell types or tissues"/>
</dbReference>
<dbReference type="ExpressionAtlas" id="Q96BX8">
    <property type="expression patterns" value="baseline and differential"/>
</dbReference>
<dbReference type="GO" id="GO:0005737">
    <property type="term" value="C:cytoplasm"/>
    <property type="evidence" value="ECO:0000318"/>
    <property type="project" value="GO_Central"/>
</dbReference>
<dbReference type="GO" id="GO:0005634">
    <property type="term" value="C:nucleus"/>
    <property type="evidence" value="ECO:0000318"/>
    <property type="project" value="GO_Central"/>
</dbReference>
<dbReference type="GO" id="GO:0046872">
    <property type="term" value="F:metal ion binding"/>
    <property type="evidence" value="ECO:0007669"/>
    <property type="project" value="UniProtKB-KW"/>
</dbReference>
<dbReference type="GO" id="GO:0030295">
    <property type="term" value="F:protein kinase activator activity"/>
    <property type="evidence" value="ECO:0000318"/>
    <property type="project" value="GO_Central"/>
</dbReference>
<dbReference type="GO" id="GO:0007165">
    <property type="term" value="P:signal transduction"/>
    <property type="evidence" value="ECO:0000318"/>
    <property type="project" value="GO_Central"/>
</dbReference>
<dbReference type="FunFam" id="1.20.140.30:FF:000001">
    <property type="entry name" value="MOB kinase activator 1A"/>
    <property type="match status" value="1"/>
</dbReference>
<dbReference type="Gene3D" id="1.20.140.30">
    <property type="entry name" value="MOB kinase activator"/>
    <property type="match status" value="1"/>
</dbReference>
<dbReference type="InterPro" id="IPR005301">
    <property type="entry name" value="MOB_kinase_act_fam"/>
</dbReference>
<dbReference type="InterPro" id="IPR036703">
    <property type="entry name" value="MOB_kinase_act_sf"/>
</dbReference>
<dbReference type="PANTHER" id="PTHR22599">
    <property type="entry name" value="MPS ONE BINDER KINASE ACTIVATOR-LIKE MOB"/>
    <property type="match status" value="1"/>
</dbReference>
<dbReference type="Pfam" id="PF03637">
    <property type="entry name" value="Mob1_phocein"/>
    <property type="match status" value="1"/>
</dbReference>
<dbReference type="SMART" id="SM01388">
    <property type="entry name" value="Mob1_phocein"/>
    <property type="match status" value="1"/>
</dbReference>
<dbReference type="SUPFAM" id="SSF101152">
    <property type="entry name" value="Mob1/phocein"/>
    <property type="match status" value="1"/>
</dbReference>
<comment type="function">
    <text evidence="1">May regulate the activity of kinases.</text>
</comment>
<comment type="similarity">
    <text evidence="2">Belongs to the MOB1/phocein family.</text>
</comment>
<comment type="sequence caution" evidence="2">
    <conflict type="erroneous gene model prediction">
        <sequence resource="EMBL-CDS" id="AAC27672"/>
    </conflict>
</comment>
<comment type="sequence caution" evidence="2">
    <conflict type="miscellaneous discrepancy">
        <sequence resource="EMBL-CDS" id="BAB84554"/>
    </conflict>
    <text>Chimera. There is an inclusion of DNA from another gene in position 141.</text>
</comment>
<evidence type="ECO:0000250" key="1"/>
<evidence type="ECO:0000305" key="2"/>
<organism>
    <name type="scientific">Homo sapiens</name>
    <name type="common">Human</name>
    <dbReference type="NCBI Taxonomy" id="9606"/>
    <lineage>
        <taxon>Eukaryota</taxon>
        <taxon>Metazoa</taxon>
        <taxon>Chordata</taxon>
        <taxon>Craniata</taxon>
        <taxon>Vertebrata</taxon>
        <taxon>Euteleostomi</taxon>
        <taxon>Mammalia</taxon>
        <taxon>Eutheria</taxon>
        <taxon>Euarchontoglires</taxon>
        <taxon>Primates</taxon>
        <taxon>Haplorrhini</taxon>
        <taxon>Catarrhini</taxon>
        <taxon>Hominidae</taxon>
        <taxon>Homo</taxon>
    </lineage>
</organism>
<reference key="1">
    <citation type="submission" date="2001-05" db="EMBL/GenBank/DDBJ databases">
        <title>Plausible MOB1 homolog expressed in the activated T-cells.</title>
        <authorList>
            <person name="Abe Y."/>
            <person name="Ueda N."/>
        </authorList>
    </citation>
    <scope>NUCLEOTIDE SEQUENCE [MRNA]</scope>
</reference>
<reference key="2">
    <citation type="submission" date="2003-08" db="EMBL/GenBank/DDBJ databases">
        <title>Characterization of the human Mob-1 like proteins.</title>
        <authorList>
            <person name="Florindo C.S."/>
            <person name="Tavares A.A."/>
        </authorList>
    </citation>
    <scope>NUCLEOTIDE SEQUENCE [MRNA]</scope>
</reference>
<reference key="3">
    <citation type="journal article" date="2004" name="Nat. Genet.">
        <title>Complete sequencing and characterization of 21,243 full-length human cDNAs.</title>
        <authorList>
            <person name="Ota T."/>
            <person name="Suzuki Y."/>
            <person name="Nishikawa T."/>
            <person name="Otsuki T."/>
            <person name="Sugiyama T."/>
            <person name="Irie R."/>
            <person name="Wakamatsu A."/>
            <person name="Hayashi K."/>
            <person name="Sato H."/>
            <person name="Nagai K."/>
            <person name="Kimura K."/>
            <person name="Makita H."/>
            <person name="Sekine M."/>
            <person name="Obayashi M."/>
            <person name="Nishi T."/>
            <person name="Shibahara T."/>
            <person name="Tanaka T."/>
            <person name="Ishii S."/>
            <person name="Yamamoto J."/>
            <person name="Saito K."/>
            <person name="Kawai Y."/>
            <person name="Isono Y."/>
            <person name="Nakamura Y."/>
            <person name="Nagahari K."/>
            <person name="Murakami K."/>
            <person name="Yasuda T."/>
            <person name="Iwayanagi T."/>
            <person name="Wagatsuma M."/>
            <person name="Shiratori A."/>
            <person name="Sudo H."/>
            <person name="Hosoiri T."/>
            <person name="Kaku Y."/>
            <person name="Kodaira H."/>
            <person name="Kondo H."/>
            <person name="Sugawara M."/>
            <person name="Takahashi M."/>
            <person name="Kanda K."/>
            <person name="Yokoi T."/>
            <person name="Furuya T."/>
            <person name="Kikkawa E."/>
            <person name="Omura Y."/>
            <person name="Abe K."/>
            <person name="Kamihara K."/>
            <person name="Katsuta N."/>
            <person name="Sato K."/>
            <person name="Tanikawa M."/>
            <person name="Yamazaki M."/>
            <person name="Ninomiya K."/>
            <person name="Ishibashi T."/>
            <person name="Yamashita H."/>
            <person name="Murakawa K."/>
            <person name="Fujimori K."/>
            <person name="Tanai H."/>
            <person name="Kimata M."/>
            <person name="Watanabe M."/>
            <person name="Hiraoka S."/>
            <person name="Chiba Y."/>
            <person name="Ishida S."/>
            <person name="Ono Y."/>
            <person name="Takiguchi S."/>
            <person name="Watanabe S."/>
            <person name="Yosida M."/>
            <person name="Hotuta T."/>
            <person name="Kusano J."/>
            <person name="Kanehori K."/>
            <person name="Takahashi-Fujii A."/>
            <person name="Hara H."/>
            <person name="Tanase T.-O."/>
            <person name="Nomura Y."/>
            <person name="Togiya S."/>
            <person name="Komai F."/>
            <person name="Hara R."/>
            <person name="Takeuchi K."/>
            <person name="Arita M."/>
            <person name="Imose N."/>
            <person name="Musashino K."/>
            <person name="Yuuki H."/>
            <person name="Oshima A."/>
            <person name="Sasaki N."/>
            <person name="Aotsuka S."/>
            <person name="Yoshikawa Y."/>
            <person name="Matsunawa H."/>
            <person name="Ichihara T."/>
            <person name="Shiohata N."/>
            <person name="Sano S."/>
            <person name="Moriya S."/>
            <person name="Momiyama H."/>
            <person name="Satoh N."/>
            <person name="Takami S."/>
            <person name="Terashima Y."/>
            <person name="Suzuki O."/>
            <person name="Nakagawa S."/>
            <person name="Senoh A."/>
            <person name="Mizoguchi H."/>
            <person name="Goto Y."/>
            <person name="Shimizu F."/>
            <person name="Wakebe H."/>
            <person name="Hishigaki H."/>
            <person name="Watanabe T."/>
            <person name="Sugiyama A."/>
            <person name="Takemoto M."/>
            <person name="Kawakami B."/>
            <person name="Yamazaki M."/>
            <person name="Watanabe K."/>
            <person name="Kumagai A."/>
            <person name="Itakura S."/>
            <person name="Fukuzumi Y."/>
            <person name="Fujimori Y."/>
            <person name="Komiyama M."/>
            <person name="Tashiro H."/>
            <person name="Tanigami A."/>
            <person name="Fujiwara T."/>
            <person name="Ono T."/>
            <person name="Yamada K."/>
            <person name="Fujii Y."/>
            <person name="Ozaki K."/>
            <person name="Hirao M."/>
            <person name="Ohmori Y."/>
            <person name="Kawabata A."/>
            <person name="Hikiji T."/>
            <person name="Kobatake N."/>
            <person name="Inagaki H."/>
            <person name="Ikema Y."/>
            <person name="Okamoto S."/>
            <person name="Okitani R."/>
            <person name="Kawakami T."/>
            <person name="Noguchi S."/>
            <person name="Itoh T."/>
            <person name="Shigeta K."/>
            <person name="Senba T."/>
            <person name="Matsumura K."/>
            <person name="Nakajima Y."/>
            <person name="Mizuno T."/>
            <person name="Morinaga M."/>
            <person name="Sasaki M."/>
            <person name="Togashi T."/>
            <person name="Oyama M."/>
            <person name="Hata H."/>
            <person name="Watanabe M."/>
            <person name="Komatsu T."/>
            <person name="Mizushima-Sugano J."/>
            <person name="Satoh T."/>
            <person name="Shirai Y."/>
            <person name="Takahashi Y."/>
            <person name="Nakagawa K."/>
            <person name="Okumura K."/>
            <person name="Nagase T."/>
            <person name="Nomura N."/>
            <person name="Kikuchi H."/>
            <person name="Masuho Y."/>
            <person name="Yamashita R."/>
            <person name="Nakai K."/>
            <person name="Yada T."/>
            <person name="Nakamura Y."/>
            <person name="Ohara O."/>
            <person name="Isogai T."/>
            <person name="Sugano S."/>
        </authorList>
    </citation>
    <scope>NUCLEOTIDE SEQUENCE [LARGE SCALE MRNA]</scope>
</reference>
<reference key="4">
    <citation type="journal article" date="2004" name="Nature">
        <title>The DNA sequence and biology of human chromosome 19.</title>
        <authorList>
            <person name="Grimwood J."/>
            <person name="Gordon L.A."/>
            <person name="Olsen A.S."/>
            <person name="Terry A."/>
            <person name="Schmutz J."/>
            <person name="Lamerdin J.E."/>
            <person name="Hellsten U."/>
            <person name="Goodstein D."/>
            <person name="Couronne O."/>
            <person name="Tran-Gyamfi M."/>
            <person name="Aerts A."/>
            <person name="Altherr M."/>
            <person name="Ashworth L."/>
            <person name="Bajorek E."/>
            <person name="Black S."/>
            <person name="Branscomb E."/>
            <person name="Caenepeel S."/>
            <person name="Carrano A.V."/>
            <person name="Caoile C."/>
            <person name="Chan Y.M."/>
            <person name="Christensen M."/>
            <person name="Cleland C.A."/>
            <person name="Copeland A."/>
            <person name="Dalin E."/>
            <person name="Dehal P."/>
            <person name="Denys M."/>
            <person name="Detter J.C."/>
            <person name="Escobar J."/>
            <person name="Flowers D."/>
            <person name="Fotopulos D."/>
            <person name="Garcia C."/>
            <person name="Georgescu A.M."/>
            <person name="Glavina T."/>
            <person name="Gomez M."/>
            <person name="Gonzales E."/>
            <person name="Groza M."/>
            <person name="Hammon N."/>
            <person name="Hawkins T."/>
            <person name="Haydu L."/>
            <person name="Ho I."/>
            <person name="Huang W."/>
            <person name="Israni S."/>
            <person name="Jett J."/>
            <person name="Kadner K."/>
            <person name="Kimball H."/>
            <person name="Kobayashi A."/>
            <person name="Larionov V."/>
            <person name="Leem S.-H."/>
            <person name="Lopez F."/>
            <person name="Lou Y."/>
            <person name="Lowry S."/>
            <person name="Malfatti S."/>
            <person name="Martinez D."/>
            <person name="McCready P.M."/>
            <person name="Medina C."/>
            <person name="Morgan J."/>
            <person name="Nelson K."/>
            <person name="Nolan M."/>
            <person name="Ovcharenko I."/>
            <person name="Pitluck S."/>
            <person name="Pollard M."/>
            <person name="Popkie A.P."/>
            <person name="Predki P."/>
            <person name="Quan G."/>
            <person name="Ramirez L."/>
            <person name="Rash S."/>
            <person name="Retterer J."/>
            <person name="Rodriguez A."/>
            <person name="Rogers S."/>
            <person name="Salamov A."/>
            <person name="Salazar A."/>
            <person name="She X."/>
            <person name="Smith D."/>
            <person name="Slezak T."/>
            <person name="Solovyev V."/>
            <person name="Thayer N."/>
            <person name="Tice H."/>
            <person name="Tsai M."/>
            <person name="Ustaszewska A."/>
            <person name="Vo N."/>
            <person name="Wagner M."/>
            <person name="Wheeler J."/>
            <person name="Wu K."/>
            <person name="Xie G."/>
            <person name="Yang J."/>
            <person name="Dubchak I."/>
            <person name="Furey T.S."/>
            <person name="DeJong P."/>
            <person name="Dickson M."/>
            <person name="Gordon D."/>
            <person name="Eichler E.E."/>
            <person name="Pennacchio L.A."/>
            <person name="Richardson P."/>
            <person name="Stubbs L."/>
            <person name="Rokhsar D.S."/>
            <person name="Myers R.M."/>
            <person name="Rubin E.M."/>
            <person name="Lucas S.M."/>
        </authorList>
    </citation>
    <scope>NUCLEOTIDE SEQUENCE [LARGE SCALE GENOMIC DNA]</scope>
</reference>
<reference key="5">
    <citation type="journal article" date="2004" name="Genome Res.">
        <title>The status, quality, and expansion of the NIH full-length cDNA project: the Mammalian Gene Collection (MGC).</title>
        <authorList>
            <consortium name="The MGC Project Team"/>
        </authorList>
    </citation>
    <scope>NUCLEOTIDE SEQUENCE [LARGE SCALE MRNA]</scope>
    <source>
        <tissue>Skin</tissue>
    </source>
</reference>
<reference key="6">
    <citation type="journal article" date="2011" name="BMC Syst. Biol.">
        <title>Initial characterization of the human central proteome.</title>
        <authorList>
            <person name="Burkard T.R."/>
            <person name="Planyavsky M."/>
            <person name="Kaupe I."/>
            <person name="Breitwieser F.P."/>
            <person name="Buerckstuemmer T."/>
            <person name="Bennett K.L."/>
            <person name="Superti-Furga G."/>
            <person name="Colinge J."/>
        </authorList>
    </citation>
    <scope>IDENTIFICATION BY MASS SPECTROMETRY [LARGE SCALE ANALYSIS]</scope>
</reference>
<reference key="7">
    <citation type="journal article" date="2015" name="Proteomics">
        <title>N-terminome analysis of the human mitochondrial proteome.</title>
        <authorList>
            <person name="Vaca Jacome A.S."/>
            <person name="Rabilloud T."/>
            <person name="Schaeffer-Reiss C."/>
            <person name="Rompais M."/>
            <person name="Ayoub D."/>
            <person name="Lane L."/>
            <person name="Bairoch A."/>
            <person name="Van Dorsselaer A."/>
            <person name="Carapito C."/>
        </authorList>
    </citation>
    <scope>IDENTIFICATION BY MASS SPECTROMETRY [LARGE SCALE ANALYSIS]</scope>
</reference>
<proteinExistence type="evidence at protein level"/>
<gene>
    <name type="primary">MOB3A</name>
    <name type="synonym">MOBKL2A</name>
</gene>
<name>MOB3A_HUMAN</name>
<protein>
    <recommendedName>
        <fullName>MOB kinase activator 3A</fullName>
    </recommendedName>
    <alternativeName>
        <fullName>MOB-LAK</fullName>
    </alternativeName>
    <alternativeName>
        <fullName>Mob1 homolog 2A</fullName>
    </alternativeName>
    <alternativeName>
        <fullName>Mps one binder kinase activator-like 2A</fullName>
    </alternativeName>
</protein>
<sequence length="217" mass="25464">MSNPFLKQVFNKDKTFRPKRKFEPGTQRFELHKKAQASLNAGLDLRLAVQLPPGEDLNDWVAVHVVDFFNRVNLIYGTISDGCTEQSCPVMSGGPKYEYRWQDEHKFRKPTALSAPRYMDLLMDWIEAQINNEDLFPTNVGTPFPKNFLQTVRKILSRLFRVFVHVYIHHFDRIAQMGSEAHVNTCYKHFYYFVKEFGLIDTKELEPLKEMTARMCH</sequence>
<feature type="chain" id="PRO_0000193570" description="MOB kinase activator 3A">
    <location>
        <begin position="1"/>
        <end position="217"/>
    </location>
</feature>
<feature type="binding site" evidence="1">
    <location>
        <position position="83"/>
    </location>
    <ligand>
        <name>Zn(2+)</name>
        <dbReference type="ChEBI" id="CHEBI:29105"/>
    </ligand>
</feature>
<feature type="binding site" evidence="1">
    <location>
        <position position="88"/>
    </location>
    <ligand>
        <name>Zn(2+)</name>
        <dbReference type="ChEBI" id="CHEBI:29105"/>
    </ligand>
</feature>
<feature type="binding site" evidence="1">
    <location>
        <position position="165"/>
    </location>
    <ligand>
        <name>Zn(2+)</name>
        <dbReference type="ChEBI" id="CHEBI:29105"/>
    </ligand>
</feature>
<feature type="binding site" evidence="1">
    <location>
        <position position="170"/>
    </location>
    <ligand>
        <name>Zn(2+)</name>
        <dbReference type="ChEBI" id="CHEBI:29105"/>
    </ligand>
</feature>
<keyword id="KW-0479">Metal-binding</keyword>
<keyword id="KW-1267">Proteomics identification</keyword>
<keyword id="KW-1185">Reference proteome</keyword>
<keyword id="KW-0862">Zinc</keyword>
<accession>Q96BX8</accession>
<accession>B3KTF1</accession>
<accession>O75249</accession>
<accession>Q8TF69</accession>